<keyword id="KW-0002">3D-structure</keyword>
<keyword id="KW-0025">Alternative splicing</keyword>
<keyword id="KW-0053">Apoptosis</keyword>
<keyword id="KW-0965">Cell junction</keyword>
<keyword id="KW-0175">Coiled coil</keyword>
<keyword id="KW-0963">Cytoplasm</keyword>
<keyword id="KW-0968">Cytoplasmic vesicle</keyword>
<keyword id="KW-0206">Cytoskeleton</keyword>
<keyword id="KW-0254">Endocytosis</keyword>
<keyword id="KW-0472">Membrane</keyword>
<keyword id="KW-0597">Phosphoprotein</keyword>
<keyword id="KW-1185">Reference proteome</keyword>
<keyword id="KW-0677">Repeat</keyword>
<keyword id="KW-0728">SH3 domain</keyword>
<keyword id="KW-0729">SH3-binding</keyword>
<keyword id="KW-0770">Synapse</keyword>
<keyword id="KW-0771">Synaptosome</keyword>
<keyword id="KW-0832">Ubl conjugation</keyword>
<name>SH3K1_MOUSE</name>
<reference key="1">
    <citation type="journal article" date="2002" name="Gene">
        <title>Organization of the mouse Ruk locus and expression of isoforms in mouse tissues.</title>
        <authorList>
            <person name="Buchman V.L."/>
            <person name="Luke C."/>
            <person name="Borthwick E.B."/>
            <person name="Gout I."/>
            <person name="Ninkina N."/>
        </authorList>
    </citation>
    <scope>NUCLEOTIDE SEQUENCE [GENOMIC DNA] (ISOFORMS 1; 2; 3; 4; 5; 6 AND 7)</scope>
    <source>
        <strain>129/Ola</strain>
    </source>
</reference>
<reference key="2">
    <citation type="journal article" date="2005" name="Science">
        <title>The transcriptional landscape of the mammalian genome.</title>
        <authorList>
            <person name="Carninci P."/>
            <person name="Kasukawa T."/>
            <person name="Katayama S."/>
            <person name="Gough J."/>
            <person name="Frith M.C."/>
            <person name="Maeda N."/>
            <person name="Oyama R."/>
            <person name="Ravasi T."/>
            <person name="Lenhard B."/>
            <person name="Wells C."/>
            <person name="Kodzius R."/>
            <person name="Shimokawa K."/>
            <person name="Bajic V.B."/>
            <person name="Brenner S.E."/>
            <person name="Batalov S."/>
            <person name="Forrest A.R."/>
            <person name="Zavolan M."/>
            <person name="Davis M.J."/>
            <person name="Wilming L.G."/>
            <person name="Aidinis V."/>
            <person name="Allen J.E."/>
            <person name="Ambesi-Impiombato A."/>
            <person name="Apweiler R."/>
            <person name="Aturaliya R.N."/>
            <person name="Bailey T.L."/>
            <person name="Bansal M."/>
            <person name="Baxter L."/>
            <person name="Beisel K.W."/>
            <person name="Bersano T."/>
            <person name="Bono H."/>
            <person name="Chalk A.M."/>
            <person name="Chiu K.P."/>
            <person name="Choudhary V."/>
            <person name="Christoffels A."/>
            <person name="Clutterbuck D.R."/>
            <person name="Crowe M.L."/>
            <person name="Dalla E."/>
            <person name="Dalrymple B.P."/>
            <person name="de Bono B."/>
            <person name="Della Gatta G."/>
            <person name="di Bernardo D."/>
            <person name="Down T."/>
            <person name="Engstrom P."/>
            <person name="Fagiolini M."/>
            <person name="Faulkner G."/>
            <person name="Fletcher C.F."/>
            <person name="Fukushima T."/>
            <person name="Furuno M."/>
            <person name="Futaki S."/>
            <person name="Gariboldi M."/>
            <person name="Georgii-Hemming P."/>
            <person name="Gingeras T.R."/>
            <person name="Gojobori T."/>
            <person name="Green R.E."/>
            <person name="Gustincich S."/>
            <person name="Harbers M."/>
            <person name="Hayashi Y."/>
            <person name="Hensch T.K."/>
            <person name="Hirokawa N."/>
            <person name="Hill D."/>
            <person name="Huminiecki L."/>
            <person name="Iacono M."/>
            <person name="Ikeo K."/>
            <person name="Iwama A."/>
            <person name="Ishikawa T."/>
            <person name="Jakt M."/>
            <person name="Kanapin A."/>
            <person name="Katoh M."/>
            <person name="Kawasawa Y."/>
            <person name="Kelso J."/>
            <person name="Kitamura H."/>
            <person name="Kitano H."/>
            <person name="Kollias G."/>
            <person name="Krishnan S.P."/>
            <person name="Kruger A."/>
            <person name="Kummerfeld S.K."/>
            <person name="Kurochkin I.V."/>
            <person name="Lareau L.F."/>
            <person name="Lazarevic D."/>
            <person name="Lipovich L."/>
            <person name="Liu J."/>
            <person name="Liuni S."/>
            <person name="McWilliam S."/>
            <person name="Madan Babu M."/>
            <person name="Madera M."/>
            <person name="Marchionni L."/>
            <person name="Matsuda H."/>
            <person name="Matsuzawa S."/>
            <person name="Miki H."/>
            <person name="Mignone F."/>
            <person name="Miyake S."/>
            <person name="Morris K."/>
            <person name="Mottagui-Tabar S."/>
            <person name="Mulder N."/>
            <person name="Nakano N."/>
            <person name="Nakauchi H."/>
            <person name="Ng P."/>
            <person name="Nilsson R."/>
            <person name="Nishiguchi S."/>
            <person name="Nishikawa S."/>
            <person name="Nori F."/>
            <person name="Ohara O."/>
            <person name="Okazaki Y."/>
            <person name="Orlando V."/>
            <person name="Pang K.C."/>
            <person name="Pavan W.J."/>
            <person name="Pavesi G."/>
            <person name="Pesole G."/>
            <person name="Petrovsky N."/>
            <person name="Piazza S."/>
            <person name="Reed J."/>
            <person name="Reid J.F."/>
            <person name="Ring B.Z."/>
            <person name="Ringwald M."/>
            <person name="Rost B."/>
            <person name="Ruan Y."/>
            <person name="Salzberg S.L."/>
            <person name="Sandelin A."/>
            <person name="Schneider C."/>
            <person name="Schoenbach C."/>
            <person name="Sekiguchi K."/>
            <person name="Semple C.A."/>
            <person name="Seno S."/>
            <person name="Sessa L."/>
            <person name="Sheng Y."/>
            <person name="Shibata Y."/>
            <person name="Shimada H."/>
            <person name="Shimada K."/>
            <person name="Silva D."/>
            <person name="Sinclair B."/>
            <person name="Sperling S."/>
            <person name="Stupka E."/>
            <person name="Sugiura K."/>
            <person name="Sultana R."/>
            <person name="Takenaka Y."/>
            <person name="Taki K."/>
            <person name="Tammoja K."/>
            <person name="Tan S.L."/>
            <person name="Tang S."/>
            <person name="Taylor M.S."/>
            <person name="Tegner J."/>
            <person name="Teichmann S.A."/>
            <person name="Ueda H.R."/>
            <person name="van Nimwegen E."/>
            <person name="Verardo R."/>
            <person name="Wei C.L."/>
            <person name="Yagi K."/>
            <person name="Yamanishi H."/>
            <person name="Zabarovsky E."/>
            <person name="Zhu S."/>
            <person name="Zimmer A."/>
            <person name="Hide W."/>
            <person name="Bult C."/>
            <person name="Grimmond S.M."/>
            <person name="Teasdale R.D."/>
            <person name="Liu E.T."/>
            <person name="Brusic V."/>
            <person name="Quackenbush J."/>
            <person name="Wahlestedt C."/>
            <person name="Mattick J.S."/>
            <person name="Hume D.A."/>
            <person name="Kai C."/>
            <person name="Sasaki D."/>
            <person name="Tomaru Y."/>
            <person name="Fukuda S."/>
            <person name="Kanamori-Katayama M."/>
            <person name="Suzuki M."/>
            <person name="Aoki J."/>
            <person name="Arakawa T."/>
            <person name="Iida J."/>
            <person name="Imamura K."/>
            <person name="Itoh M."/>
            <person name="Kato T."/>
            <person name="Kawaji H."/>
            <person name="Kawagashira N."/>
            <person name="Kawashima T."/>
            <person name="Kojima M."/>
            <person name="Kondo S."/>
            <person name="Konno H."/>
            <person name="Nakano K."/>
            <person name="Ninomiya N."/>
            <person name="Nishio T."/>
            <person name="Okada M."/>
            <person name="Plessy C."/>
            <person name="Shibata K."/>
            <person name="Shiraki T."/>
            <person name="Suzuki S."/>
            <person name="Tagami M."/>
            <person name="Waki K."/>
            <person name="Watahiki A."/>
            <person name="Okamura-Oho Y."/>
            <person name="Suzuki H."/>
            <person name="Kawai J."/>
            <person name="Hayashizaki Y."/>
        </authorList>
    </citation>
    <scope>NUCLEOTIDE SEQUENCE [LARGE SCALE MRNA] (ISOFORMS 1; 2 AND 3)</scope>
    <source>
        <strain>C57BL/6J</strain>
        <tissue>Embryonic stem cell</tissue>
        <tissue>Hypothalamus</tissue>
        <tissue>Lung</tissue>
        <tissue>Thymus</tissue>
    </source>
</reference>
<reference key="3">
    <citation type="journal article" date="2009" name="PLoS Biol.">
        <title>Lineage-specific biology revealed by a finished genome assembly of the mouse.</title>
        <authorList>
            <person name="Church D.M."/>
            <person name="Goodstadt L."/>
            <person name="Hillier L.W."/>
            <person name="Zody M.C."/>
            <person name="Goldstein S."/>
            <person name="She X."/>
            <person name="Bult C.J."/>
            <person name="Agarwala R."/>
            <person name="Cherry J.L."/>
            <person name="DiCuccio M."/>
            <person name="Hlavina W."/>
            <person name="Kapustin Y."/>
            <person name="Meric P."/>
            <person name="Maglott D."/>
            <person name="Birtle Z."/>
            <person name="Marques A.C."/>
            <person name="Graves T."/>
            <person name="Zhou S."/>
            <person name="Teague B."/>
            <person name="Potamousis K."/>
            <person name="Churas C."/>
            <person name="Place M."/>
            <person name="Herschleb J."/>
            <person name="Runnheim R."/>
            <person name="Forrest D."/>
            <person name="Amos-Landgraf J."/>
            <person name="Schwartz D.C."/>
            <person name="Cheng Z."/>
            <person name="Lindblad-Toh K."/>
            <person name="Eichler E.E."/>
            <person name="Ponting C.P."/>
        </authorList>
    </citation>
    <scope>NUCLEOTIDE SEQUENCE [LARGE SCALE GENOMIC DNA]</scope>
    <source>
        <strain>C57BL/6J</strain>
    </source>
</reference>
<reference key="4">
    <citation type="journal article" date="2000" name="Cytogenet. Cell Genet.">
        <title>Assignment of SETA to distal mouse X chromosome by radiation hybrid mapping.</title>
        <authorList>
            <person name="Hyatt M.A."/>
            <person name="Sykes V.W."/>
            <person name="Boyer A.D."/>
            <person name="Arden K.C."/>
            <person name="Boegler O."/>
        </authorList>
    </citation>
    <scope>NUCLEOTIDE SEQUENCE [GENOMIC DNA] OF 247-286</scope>
    <source>
        <strain>129/SvJ</strain>
    </source>
</reference>
<reference key="5">
    <citation type="submission" date="1999-03" db="EMBL/GenBank/DDBJ databases">
        <title>The WashU-NCI mouse EST project 1999.</title>
        <authorList>
            <person name="Marra M."/>
            <person name="Hillier L."/>
            <person name="Kucaba T."/>
            <person name="Martin J."/>
            <person name="Beck C."/>
            <person name="Wylie T."/>
            <person name="Underwood K."/>
            <person name="Steptoe M."/>
            <person name="Theising B."/>
            <person name="Allen M."/>
            <person name="Bowers Y."/>
            <person name="Person B."/>
            <person name="Swaller T."/>
            <person name="Gibbons M."/>
            <person name="Pape D."/>
            <person name="Harvey N."/>
            <person name="Schurk R."/>
            <person name="Ritter E."/>
            <person name="Kohn S."/>
            <person name="Shin T."/>
            <person name="Jackson Y."/>
            <person name="Cardenas M."/>
            <person name="McCann R."/>
            <person name="Waterston R."/>
            <person name="Wilson R."/>
        </authorList>
    </citation>
    <scope>NUCLEOTIDE SEQUENCE [MRNA] OF 250-709 (ISOFORM 8)</scope>
    <source>
        <strain>C57BL/6J</strain>
        <tissue>Thymus</tissue>
    </source>
</reference>
<reference key="6">
    <citation type="journal article" date="2000" name="Cell. Signal.">
        <title>SETA is a multifunctional adapter protein with three SH3 domains that binds Grb2, Cbl, and the novel SB1 proteins.</title>
        <authorList>
            <person name="Borinstein S.C."/>
            <person name="Hyatt M.A."/>
            <person name="Sykes V.W."/>
            <person name="Straub R.E."/>
            <person name="Lipkowitz S."/>
            <person name="Boulter J."/>
            <person name="Boegler O."/>
        </authorList>
    </citation>
    <scope>INTERACTION WITH SHKBP1</scope>
</reference>
<reference key="7">
    <citation type="journal article" date="2007" name="Proc. Natl. Acad. Sci. U.S.A.">
        <title>Large-scale phosphorylation analysis of mouse liver.</title>
        <authorList>
            <person name="Villen J."/>
            <person name="Beausoleil S.A."/>
            <person name="Gerber S.A."/>
            <person name="Gygi S.P."/>
        </authorList>
    </citation>
    <scope>PHOSPHORYLATION [LARGE SCALE ANALYSIS] AT SER-274</scope>
    <scope>IDENTIFICATION BY MASS SPECTROMETRY [LARGE SCALE ANALYSIS]</scope>
    <source>
        <tissue>Liver</tissue>
    </source>
</reference>
<reference key="8">
    <citation type="journal article" date="2008" name="Cell. Signal.">
        <title>Ataxin-2 associates with the endocytosis complex and affects EGF receptor trafficking.</title>
        <authorList>
            <person name="Nonis D."/>
            <person name="Schmidt M.H."/>
            <person name="van de Loo S."/>
            <person name="Eich F."/>
            <person name="Dikic I."/>
            <person name="Nowock J."/>
            <person name="Auburger G."/>
        </authorList>
    </citation>
    <scope>INTERACTION WITH ATX2</scope>
</reference>
<reference key="9">
    <citation type="journal article" date="2009" name="Immunity">
        <title>The phagosomal proteome in interferon-gamma-activated macrophages.</title>
        <authorList>
            <person name="Trost M."/>
            <person name="English L."/>
            <person name="Lemieux S."/>
            <person name="Courcelles M."/>
            <person name="Desjardins M."/>
            <person name="Thibault P."/>
        </authorList>
    </citation>
    <scope>PHOSPHORYLATION [LARGE SCALE ANALYSIS] AT SER-274</scope>
    <scope>IDENTIFICATION BY MASS SPECTROMETRY [LARGE SCALE ANALYSIS]</scope>
</reference>
<reference key="10">
    <citation type="journal article" date="2010" name="Cell">
        <title>A tissue-specific atlas of mouse protein phosphorylation and expression.</title>
        <authorList>
            <person name="Huttlin E.L."/>
            <person name="Jedrychowski M.P."/>
            <person name="Elias J.E."/>
            <person name="Goswami T."/>
            <person name="Rad R."/>
            <person name="Beausoleil S.A."/>
            <person name="Villen J."/>
            <person name="Haas W."/>
            <person name="Sowa M.E."/>
            <person name="Gygi S.P."/>
        </authorList>
    </citation>
    <scope>PHOSPHORYLATION [LARGE SCALE ANALYSIS] AT SER-156; SER-159; SER-274; SER-480; SER-553; SER-555 AND SER-565</scope>
    <scope>IDENTIFICATION BY MASS SPECTROMETRY [LARGE SCALE ANALYSIS]</scope>
    <source>
        <tissue>Brain</tissue>
        <tissue>Brown adipose tissue</tissue>
        <tissue>Heart</tissue>
        <tissue>Kidney</tissue>
        <tissue>Lung</tissue>
        <tissue>Pancreas</tissue>
        <tissue>Spleen</tissue>
        <tissue>Testis</tissue>
    </source>
</reference>
<reference key="11">
    <citation type="journal article" date="2011" name="Cell Biochem. Funct.">
        <title>SH3KBP1-binding protein 1 prevents epidermal growth factor receptor degradation by the interruption of c-Cbl-CIN85 complex.</title>
        <authorList>
            <person name="Feng L."/>
            <person name="Wang J.T."/>
            <person name="Jin H."/>
            <person name="Qian K."/>
            <person name="Geng J.G."/>
        </authorList>
    </citation>
    <scope>INTERACTION WITH CBL AND SHKBP1</scope>
    <scope>SUBCELLULAR LOCATION</scope>
</reference>
<reference evidence="13 14" key="12">
    <citation type="submission" date="2006-06" db="PDB data bank">
        <title>Solution structure of the SH3 domains of SH3-domain kinase binding protein 1.</title>
        <authorList>
            <consortium name="RIKEN structural genomics initiative (RSGI)"/>
        </authorList>
    </citation>
    <scope>STRUCTURE BY NMR OF 101-159 AND 314-370</scope>
</reference>
<reference evidence="15" key="13">
    <citation type="journal article" date="2018" name="Biochemistry">
        <title>Biochemical and Structural Studies of the Interaction between ARAP1 and CIN85.</title>
        <authorList>
            <person name="Li Q."/>
            <person name="Yang W."/>
            <person name="Wang Y."/>
            <person name="Liu W."/>
        </authorList>
    </citation>
    <scope>X-RAY CRYSTALLOGRAPHY (1.32 ANGSTROMS) OF 98-157 IN COMPLEX WITH ARAP1</scope>
    <scope>INTERACTION WITH ARAP1 AND CBL</scope>
</reference>
<comment type="function">
    <text evidence="1 2">Adapter protein involved in regulating diverse signal transduction pathways. Involved in the regulation of endocytosis and lysosomal degradation of ligand-induced receptor tyrosine kinases, including EGFR and MET/hepatocyte growth factor receptor, through an association with CBL and endophilins. The association with CBL, and thus the receptor internalization, may be inhibited by an interaction with PDCD6IP and/or SPRY2. Involved in regulation of ligand-dependent endocytosis of the IgE receptor. Attenuates phosphatidylinositol 3-kinase activity by interaction with its regulatory subunit (By similarity). May be involved in regulation of cell adhesion; promotes the interaction between TTK2B and PDCD6IP. May be involved in the regulation of cellular stress response via the MAPK pathways through its interaction with MAP3K4. Is involved in modulation of tumor necrosis factor mediated apoptosis. Plays a role in the regulation of cell morphology and cytoskeletal organization. Required in the control of cell shape and migration (By similarity). Has an essential role in the stimulation of B cell activation (By similarity).</text>
</comment>
<comment type="subunit">
    <text evidence="2 6 7 8 9">Can self-associate and form homotetramers. Interacts with CD2, F-actin capping protein, PIK3R3, GRB2, EGFR, MET, BLNK, MAP3K4, PDCD6IP, SPRY2, ARHGAP17, ARHGAP27, CRK, BCAR1, SOS1, ASAP1, ARAP3, HIP1R, SYNJ2, INPP5D and STAP1 (By similarity). Interacts with E3 ubiquitin-protein ligase CBL (PubMed:21830225, PubMed:29589748). Interacts with CBLB, but does not interact with CBLC. Two molecules of SH3KBP1 seem to bind through their respective SH3 1 domain to one molecule of CBLB. The interaction with CBL or CBLB and EGFR is increased upon EGF stimulation. The interaction with CBL is attenuated by PDCD6IP. Interacts (via SH3 domains) with ARAP1 (PubMed:29589748). The interaction is independent of EGF and does not affect ARAP1 GTPase-activating activity but is involved in regulating ubiquitination and endocytic trafficking of EGFR (By similarity). ARAP1 competes with CBL for binding to SH3KBP1 and prevents interaction of CBL with SH3KBP1; this is likely to regulate SH3KBP1-mediated internalization of EGFR (PubMed:29589748). Interacts through its proline-rich region with the SH3 domain of endophilins SH3GL1, SH3GL2 and SH3GL3. The SH3KBP1-endophilin complex seems to associate with a complex containing the phosphorylated receptor (EGFR or MET) and phosphorylated CBL. Probably associates with ASAP1 and phosphorylated EGFR. Probably part of a complex consisting of at least SH3KBP1, ASAP1 and ARAP3. Interacts with focal adhesion kinases PTK2/FAK1 and PTK2B/PYK2, probably as a dimer. Interacts with DAB2 and probably associates with chathrin through its interaction with DAB2. Part of a complex consisting of SH3KBP1, DAB2, and clathrin heavy chain. DAB2 and clathrin dissociate from SH3KBP1 following growth factor treatment, enabling interaction with CBL. Interacts with DDN and probably associates with MAGI2 through its interaction with DDN. Interacts with the SH3 domains of SRC tyrosine-protein kinases SRC, LCK, LYN, FGR, FYN and HCK. Interacts with TRADD, BIRC2, TRAF1, TRAF2 and TNFR1, and the association with a TNFR1-associated complex upon stimulation with TNF-alpha seems to be mediated by SRC. Probably part of a complex consisting of at least SH3KBP1, ASAP1 and ARAP3 (By similarity). Interacts (via SH3 domains) with SHKBP1 (via PXXXPR motifs) (PubMed:11152963, PubMed:21830225). Interacts with ATX2 (PubMed:18602463). Interaction with CBL is abolished in the presence of SHKBP1 (PubMed:21830225). Interacts (via SH3 domains) with ZFP36 (via extreme C-terminal region). Interacts with MAP3K4; this interaction enhances the association with ZFP36 (By similarity).</text>
</comment>
<comment type="interaction">
    <interactant intactId="EBI-642709">
        <id>Q8R550</id>
    </interactant>
    <interactant intactId="EBI-300895">
        <id>Q62108</id>
        <label>Dlg4</label>
    </interactant>
    <organismsDiffer>false</organismsDiffer>
    <experiments>3</experiments>
</comment>
<comment type="subcellular location">
    <subcellularLocation>
        <location evidence="2">Cytoplasm</location>
    </subcellularLocation>
    <subcellularLocation>
        <location evidence="1">Cytoplasm</location>
        <location evidence="1">Cytoskeleton</location>
    </subcellularLocation>
    <subcellularLocation>
        <location evidence="1">Cytoplasmic vesicle membrane</location>
        <topology evidence="1">Peripheral membrane protein</topology>
    </subcellularLocation>
    <subcellularLocation>
        <location evidence="1">Synapse</location>
        <location evidence="1">Synaptosome</location>
    </subcellularLocation>
    <subcellularLocation>
        <location evidence="1">Cell junction</location>
        <location evidence="1">Focal adhesion</location>
    </subcellularLocation>
    <text evidence="1 2 8">Localized in endocytic vesicles containing clustered receptors. Colocalizes with ASAP1 in vesicular structures. Colocalized with actin microfilaments and focal adhesions (By similarity). Colocalized with MAGI2 in synaptosomes (By similarity). Translocation to EGFR containing vesicles upon EGF stimulation is inhibited in the presence of SH3KBP1 (PubMed:21830225). Colocalizes with ZFP36 in the cytoplasm (By similarity).</text>
</comment>
<comment type="alternative products">
    <event type="alternative splicing"/>
    <isoform>
        <id>Q8R550-1</id>
        <name>1</name>
        <name>Ruk-xl</name>
        <sequence type="displayed"/>
    </isoform>
    <isoform>
        <id>Q8R550-2</id>
        <name>2</name>
        <name>Ruk-l</name>
        <sequence type="described" ref="VSP_007510"/>
    </isoform>
    <isoform>
        <id>Q8R550-3</id>
        <name>3</name>
        <name>Ruk-deltaA</name>
        <sequence type="described" ref="VSP_007505 VSP_007510"/>
    </isoform>
    <isoform>
        <id>Q8R550-4</id>
        <name>4</name>
        <name>Ruk-m1</name>
        <sequence type="described" ref="VSP_007507"/>
    </isoform>
    <isoform>
        <id>Q8R550-5</id>
        <name>5</name>
        <name>Ruk-m3</name>
        <sequence type="described" ref="VSP_007506"/>
    </isoform>
    <isoform>
        <id>Q8R550-6</id>
        <name>6</name>
        <name>Ruk-t</name>
        <sequence type="described" ref="VSP_007508"/>
    </isoform>
    <isoform>
        <id>Q8R550-7</id>
        <name>7</name>
        <name>Ruk-h</name>
        <sequence type="described" ref="VSP_007509"/>
    </isoform>
    <isoform>
        <id>Q8R550-8</id>
        <name>8</name>
        <name>Ruk-deltaCP</name>
        <sequence type="described" ref="VSP_007510 VSP_007511"/>
    </isoform>
</comment>
<comment type="PTM">
    <text evidence="1">Monoubiquitinated by CBL and CBLB after EGF stimulation; probably on its C-terminus.</text>
</comment>
<evidence type="ECO:0000250" key="1"/>
<evidence type="ECO:0000250" key="2">
    <source>
        <dbReference type="UniProtKB" id="Q96B97"/>
    </source>
</evidence>
<evidence type="ECO:0000255" key="3"/>
<evidence type="ECO:0000255" key="4">
    <source>
        <dbReference type="PROSITE-ProRule" id="PRU00192"/>
    </source>
</evidence>
<evidence type="ECO:0000256" key="5">
    <source>
        <dbReference type="SAM" id="MobiDB-lite"/>
    </source>
</evidence>
<evidence type="ECO:0000269" key="6">
    <source>
    </source>
</evidence>
<evidence type="ECO:0000269" key="7">
    <source>
    </source>
</evidence>
<evidence type="ECO:0000269" key="8">
    <source>
    </source>
</evidence>
<evidence type="ECO:0000269" key="9">
    <source>
    </source>
</evidence>
<evidence type="ECO:0000303" key="10">
    <source>
    </source>
</evidence>
<evidence type="ECO:0000303" key="11">
    <source ref="5"/>
</evidence>
<evidence type="ECO:0000305" key="12"/>
<evidence type="ECO:0007744" key="13">
    <source>
        <dbReference type="PDB" id="1WI7"/>
    </source>
</evidence>
<evidence type="ECO:0007744" key="14">
    <source>
        <dbReference type="PDB" id="2DA9"/>
    </source>
</evidence>
<evidence type="ECO:0007744" key="15">
    <source>
        <dbReference type="PDB" id="5XHZ"/>
    </source>
</evidence>
<evidence type="ECO:0007744" key="16">
    <source>
    </source>
</evidence>
<evidence type="ECO:0007744" key="17">
    <source>
    </source>
</evidence>
<evidence type="ECO:0007744" key="18">
    <source>
    </source>
</evidence>
<evidence type="ECO:0007829" key="19">
    <source>
        <dbReference type="PDB" id="2DA9"/>
    </source>
</evidence>
<evidence type="ECO:0007829" key="20">
    <source>
        <dbReference type="PDB" id="5XHZ"/>
    </source>
</evidence>
<feature type="chain" id="PRO_0000097729" description="SH3 domain-containing kinase-binding protein 1">
    <location>
        <begin position="1"/>
        <end position="709"/>
    </location>
</feature>
<feature type="domain" description="SH3 1" evidence="4">
    <location>
        <begin position="1"/>
        <end position="58"/>
    </location>
</feature>
<feature type="domain" description="SH3 2" evidence="4">
    <location>
        <begin position="98"/>
        <end position="157"/>
    </location>
</feature>
<feature type="domain" description="SH3 3" evidence="4">
    <location>
        <begin position="311"/>
        <end position="372"/>
    </location>
</feature>
<feature type="region of interest" description="Disordered" evidence="5">
    <location>
        <begin position="221"/>
        <end position="242"/>
    </location>
</feature>
<feature type="region of interest" description="Disordered" evidence="5">
    <location>
        <begin position="289"/>
        <end position="309"/>
    </location>
</feature>
<feature type="region of interest" description="Disordered" evidence="5">
    <location>
        <begin position="372"/>
        <end position="485"/>
    </location>
</feature>
<feature type="region of interest" description="Disordered" evidence="5">
    <location>
        <begin position="511"/>
        <end position="650"/>
    </location>
</feature>
<feature type="coiled-coil region" evidence="3">
    <location>
        <begin position="646"/>
        <end position="708"/>
    </location>
</feature>
<feature type="compositionally biased region" description="Low complexity" evidence="5">
    <location>
        <begin position="221"/>
        <end position="239"/>
    </location>
</feature>
<feature type="compositionally biased region" description="Basic and acidic residues" evidence="5">
    <location>
        <begin position="399"/>
        <end position="434"/>
    </location>
</feature>
<feature type="compositionally biased region" description="Polar residues" evidence="5">
    <location>
        <begin position="513"/>
        <end position="528"/>
    </location>
</feature>
<feature type="compositionally biased region" description="Low complexity" evidence="5">
    <location>
        <begin position="535"/>
        <end position="554"/>
    </location>
</feature>
<feature type="compositionally biased region" description="Basic and acidic residues" evidence="5">
    <location>
        <begin position="561"/>
        <end position="575"/>
    </location>
</feature>
<feature type="compositionally biased region" description="Polar residues" evidence="5">
    <location>
        <begin position="579"/>
        <end position="592"/>
    </location>
</feature>
<feature type="compositionally biased region" description="Low complexity" evidence="5">
    <location>
        <begin position="600"/>
        <end position="623"/>
    </location>
</feature>
<feature type="compositionally biased region" description="Polar residues" evidence="5">
    <location>
        <begin position="627"/>
        <end position="636"/>
    </location>
</feature>
<feature type="modified residue" description="Phosphoserine" evidence="18">
    <location>
        <position position="156"/>
    </location>
</feature>
<feature type="modified residue" description="Phosphoserine" evidence="18">
    <location>
        <position position="159"/>
    </location>
</feature>
<feature type="modified residue" description="Phosphoserine" evidence="2">
    <location>
        <position position="227"/>
    </location>
</feature>
<feature type="modified residue" description="Phosphoserine" evidence="16 17 18">
    <location>
        <position position="274"/>
    </location>
</feature>
<feature type="modified residue" description="Phosphothreonine" evidence="2">
    <location>
        <position position="298"/>
    </location>
</feature>
<feature type="modified residue" description="Phosphoserine" evidence="18">
    <location>
        <position position="480"/>
    </location>
</feature>
<feature type="modified residue" description="Phosphoserine" evidence="18">
    <location>
        <position position="553"/>
    </location>
</feature>
<feature type="modified residue" description="Phosphoserine" evidence="18">
    <location>
        <position position="555"/>
    </location>
</feature>
<feature type="modified residue" description="Phosphoserine" evidence="18">
    <location>
        <position position="565"/>
    </location>
</feature>
<feature type="modified residue" description="Phosphoserine" evidence="2">
    <location>
        <position position="631"/>
    </location>
</feature>
<feature type="splice variant" id="VSP_007509" description="In isoform 7." evidence="12">
    <location>
        <begin position="1"/>
        <end position="599"/>
    </location>
</feature>
<feature type="splice variant" id="VSP_007508" description="In isoform 6." evidence="12">
    <original>MVEAIVEFDYQAQHDDELTISVGEVITNIRKEDGGWWEGQINGRRGLFPDNFVREIKKDMKKDLLSNKAPEKPMHDVSSGNALLSSETILRTNKRGERRRRRCQVAFSYLPQNDDELELKVGDIIEVVGEVEEGWWEGVLNGKTGMFPSNFIKELSGESDELGISQDEQLSKSRPEGFLPASLLPFPAHGAKGKTTFEGTILYRAAPGKTEGHRRYYSLRETTGSESDGGDSSSTKSEGANGTMATAAIQPKKVKGVGFGDIFKDKPIKLRPRSIEVENDFLPVEKTIGKKLPPATSTPDPSKTEMDSRTKTKDYCKVIFPYEAQNDDELTIKEGDIVTLINKDCIDVGWWEGELNGRRGVFPDNFVKLLPSDFDKEGNRPKKPPPPSAPVVKQGAGTTERKHEIKKIPPERPETLPNRTEEKERPEREPKLDLQKPSVPAIPPKKPRPPKTNSLNRPGALPPRRPERPVGPLTHTR</original>
    <variation>MFPFRKGARPPSMNLFRQTCW</variation>
    <location>
        <begin position="1"/>
        <end position="477"/>
    </location>
</feature>
<feature type="splice variant" id="VSP_007507" description="In isoform 4." evidence="12">
    <original>MVEAIVEFDYQAQHDDELTISVGEVITNIRKEDGGWWEGQINGRRGLFPDNFVREIKKDMKKDLLSNKAPEKPMHDVSSGNALLSSETILRTNKRGERRRRRCQVAFSYLPQNDDELELKVGDIIEVVGEVEEGWWEGVLNGKTGMFPSNFIKELSGESDELGISQDEQLSKSRPEGFLPASLLPFPAHGAKGKTTFEGTILYRAAPGKTEGHRRYYSLRETTGSESDGGDSSSTKSEGANGTMATAAIQPKKVKGVGFGDIFKDKPIKLRPRSIEVENDFLPVEK</original>
    <variation>MGEEVSLGEKNISPEQASCGALHPRGWGSQTFGVFLVNEET</variation>
    <location>
        <begin position="1"/>
        <end position="286"/>
    </location>
</feature>
<feature type="splice variant" id="VSP_007506" description="In isoform 5." evidence="12">
    <original>MVEAIVEFDYQAQHDDELTISVGEVITNIRKEDGGWWEGQINGRRGLFPDNFVREIKKDMKKDLLSNKAPEKPMHDVSSGNALLSSETILRTNKRGERRRRRCQVAFSYLPQNDDELELKVGDIIEVVGEVEEGWWEGVLNGKTGMFPSNFIKELSGESDELGISQDEQLSKSRPEGFLPASLLPFPAHGAKGKTTFEGTILYRAAPGKTEGHRRYYSLRETTGSESDGGDSSSTKSEGANGTMATAAIQPKKVKGVGFGDIFKDKPIKLRPRSIEVENDFLPVEK</original>
    <variation>MGEE</variation>
    <location>
        <begin position="1"/>
        <end position="286"/>
    </location>
</feature>
<feature type="splice variant" id="VSP_007505" description="In isoform 3." evidence="10">
    <original>MVEAIVEFDYQAQHDDELTISVGEVITNIRKEDGGWWEGQINGRRGLFPDNFVR</original>
    <variation>MELSAAKAPSPTDLPES</variation>
    <location>
        <begin position="1"/>
        <end position="54"/>
    </location>
</feature>
<feature type="splice variant" id="VSP_007510" description="In isoform 2, isoform 3 and isoform 8." evidence="10 11">
    <location>
        <begin position="174"/>
        <end position="217"/>
    </location>
</feature>
<feature type="splice variant" id="VSP_007511" description="In isoform 8." evidence="11">
    <location>
        <begin position="320"/>
        <end position="630"/>
    </location>
</feature>
<feature type="sequence conflict" description="In Ref. 5." evidence="12" ref="5">
    <original>PKKVKGVGF</original>
    <variation>NDDELTIKE</variation>
    <location>
        <begin position="251"/>
        <end position="259"/>
    </location>
</feature>
<feature type="sequence conflict" description="In Ref. 2; BAC30033." evidence="12" ref="2">
    <original>GDSPKIDLAGSALSGILDKDLSDRSNDIDLEGFDSVISSTEKLSHPTTSRP</original>
    <variation>YCHVLTKAGGHGMIMKIGEGMRTKLCLKIPATFFSSEKVVARCWGATWCRL</variation>
    <location>
        <begin position="478"/>
        <end position="528"/>
    </location>
</feature>
<feature type="sequence conflict" description="In Ref. 2; BAC30033." evidence="12" ref="2">
    <location>
        <begin position="529"/>
        <end position="709"/>
    </location>
</feature>
<feature type="strand" evidence="20">
    <location>
        <begin position="102"/>
        <end position="105"/>
    </location>
</feature>
<feature type="strand" evidence="20">
    <location>
        <begin position="124"/>
        <end position="132"/>
    </location>
</feature>
<feature type="strand" evidence="20">
    <location>
        <begin position="135"/>
        <end position="140"/>
    </location>
</feature>
<feature type="strand" evidence="20">
    <location>
        <begin position="143"/>
        <end position="148"/>
    </location>
</feature>
<feature type="helix" evidence="20">
    <location>
        <begin position="149"/>
        <end position="151"/>
    </location>
</feature>
<feature type="strand" evidence="19">
    <location>
        <begin position="314"/>
        <end position="318"/>
    </location>
</feature>
<feature type="strand" evidence="19">
    <location>
        <begin position="336"/>
        <end position="342"/>
    </location>
</feature>
<feature type="strand" evidence="19">
    <location>
        <begin position="350"/>
        <end position="354"/>
    </location>
</feature>
<feature type="strand" evidence="19">
    <location>
        <begin position="359"/>
        <end position="363"/>
    </location>
</feature>
<feature type="helix" evidence="19">
    <location>
        <begin position="364"/>
        <end position="366"/>
    </location>
</feature>
<feature type="strand" evidence="19">
    <location>
        <begin position="367"/>
        <end position="369"/>
    </location>
</feature>
<proteinExistence type="evidence at protein level"/>
<accession>Q8R550</accession>
<accession>B1AZ86</accession>
<accession>B1AZ87</accession>
<accession>Q8CAL8</accession>
<accession>Q8CEF6</accession>
<accession>Q8R545</accession>
<accession>Q8R546</accession>
<accession>Q8R547</accession>
<accession>Q8R548</accession>
<accession>Q8R549</accession>
<accession>Q8R551</accession>
<accession>Q9CTQ9</accession>
<accession>Q9DC14</accession>
<accession>Q9JKC3</accession>
<gene>
    <name type="primary">Sh3kbp1</name>
    <name type="synonym">Ruk</name>
    <name type="synonym">Seta</name>
</gene>
<protein>
    <recommendedName>
        <fullName>SH3 domain-containing kinase-binding protein 1</fullName>
    </recommendedName>
    <alternativeName>
        <fullName>Regulator of ubiquitous kinase</fullName>
        <shortName>Ruk</shortName>
    </alternativeName>
    <alternativeName>
        <fullName>SH3-containing, expressed in tumorigenic astrocytes</fullName>
    </alternativeName>
</protein>
<sequence length="709" mass="78170">MVEAIVEFDYQAQHDDELTISVGEVITNIRKEDGGWWEGQINGRRGLFPDNFVREIKKDMKKDLLSNKAPEKPMHDVSSGNALLSSETILRTNKRGERRRRRCQVAFSYLPQNDDELELKVGDIIEVVGEVEEGWWEGVLNGKTGMFPSNFIKELSGESDELGISQDEQLSKSRPEGFLPASLLPFPAHGAKGKTTFEGTILYRAAPGKTEGHRRYYSLRETTGSESDGGDSSSTKSEGANGTMATAAIQPKKVKGVGFGDIFKDKPIKLRPRSIEVENDFLPVEKTIGKKLPPATSTPDPSKTEMDSRTKTKDYCKVIFPYEAQNDDELTIKEGDIVTLINKDCIDVGWWEGELNGRRGVFPDNFVKLLPSDFDKEGNRPKKPPPPSAPVVKQGAGTTERKHEIKKIPPERPETLPNRTEEKERPEREPKLDLQKPSVPAIPPKKPRPPKTNSLNRPGALPPRRPERPVGPLTHTRGDSPKIDLAGSALSGILDKDLSDRSNDIDLEGFDSVISSTEKLSHPTTSRPKATGRRPPSQSLTSSSLSSPDIFDSPSPEEDKEEHISLAHRGIDVSKKTSKTVTISQVSDNKTSLPPKPGTMAAASSGPASLSSVASSPMSSSLGTAGQRASSPSLFSTEGKPKMEPAVSSQAAIEELKMQVRELRTIIETMKDQQKREIKQLLSELDEEKKIRLRLQMEVNDIKKALQSK</sequence>
<dbReference type="EMBL" id="AF472327">
    <property type="protein sequence ID" value="AAL82456.1"/>
    <property type="molecule type" value="Genomic_DNA"/>
</dbReference>
<dbReference type="EMBL" id="AF472306">
    <property type="protein sequence ID" value="AAL82456.1"/>
    <property type="status" value="JOINED"/>
    <property type="molecule type" value="Genomic_DNA"/>
</dbReference>
<dbReference type="EMBL" id="AF472307">
    <property type="protein sequence ID" value="AAL82456.1"/>
    <property type="status" value="JOINED"/>
    <property type="molecule type" value="Genomic_DNA"/>
</dbReference>
<dbReference type="EMBL" id="AF472308">
    <property type="protein sequence ID" value="AAL82456.1"/>
    <property type="status" value="JOINED"/>
    <property type="molecule type" value="Genomic_DNA"/>
</dbReference>
<dbReference type="EMBL" id="AF472309">
    <property type="protein sequence ID" value="AAL82456.1"/>
    <property type="status" value="JOINED"/>
    <property type="molecule type" value="Genomic_DNA"/>
</dbReference>
<dbReference type="EMBL" id="AF472312">
    <property type="protein sequence ID" value="AAL82456.1"/>
    <property type="status" value="JOINED"/>
    <property type="molecule type" value="Genomic_DNA"/>
</dbReference>
<dbReference type="EMBL" id="AF472315">
    <property type="protein sequence ID" value="AAL82456.1"/>
    <property type="status" value="JOINED"/>
    <property type="molecule type" value="Genomic_DNA"/>
</dbReference>
<dbReference type="EMBL" id="AF472316">
    <property type="protein sequence ID" value="AAL82456.1"/>
    <property type="status" value="JOINED"/>
    <property type="molecule type" value="Genomic_DNA"/>
</dbReference>
<dbReference type="EMBL" id="AF472317">
    <property type="protein sequence ID" value="AAL82456.1"/>
    <property type="status" value="JOINED"/>
    <property type="molecule type" value="Genomic_DNA"/>
</dbReference>
<dbReference type="EMBL" id="AF472318">
    <property type="protein sequence ID" value="AAL82456.1"/>
    <property type="status" value="JOINED"/>
    <property type="molecule type" value="Genomic_DNA"/>
</dbReference>
<dbReference type="EMBL" id="AF472319">
    <property type="protein sequence ID" value="AAL82456.1"/>
    <property type="status" value="JOINED"/>
    <property type="molecule type" value="Genomic_DNA"/>
</dbReference>
<dbReference type="EMBL" id="AF472320">
    <property type="protein sequence ID" value="AAL82456.1"/>
    <property type="status" value="JOINED"/>
    <property type="molecule type" value="Genomic_DNA"/>
</dbReference>
<dbReference type="EMBL" id="AF472322">
    <property type="protein sequence ID" value="AAL82456.1"/>
    <property type="status" value="JOINED"/>
    <property type="molecule type" value="Genomic_DNA"/>
</dbReference>
<dbReference type="EMBL" id="AF472323">
    <property type="protein sequence ID" value="AAL82456.1"/>
    <property type="status" value="JOINED"/>
    <property type="molecule type" value="Genomic_DNA"/>
</dbReference>
<dbReference type="EMBL" id="AF472324">
    <property type="protein sequence ID" value="AAL82456.1"/>
    <property type="status" value="JOINED"/>
    <property type="molecule type" value="Genomic_DNA"/>
</dbReference>
<dbReference type="EMBL" id="AF472325">
    <property type="protein sequence ID" value="AAL82456.1"/>
    <property type="status" value="JOINED"/>
    <property type="molecule type" value="Genomic_DNA"/>
</dbReference>
<dbReference type="EMBL" id="AF472326">
    <property type="protein sequence ID" value="AAL82456.1"/>
    <property type="status" value="JOINED"/>
    <property type="molecule type" value="Genomic_DNA"/>
</dbReference>
<dbReference type="EMBL" id="AF472327">
    <property type="protein sequence ID" value="AAL82457.1"/>
    <property type="molecule type" value="Genomic_DNA"/>
</dbReference>
<dbReference type="EMBL" id="AF472325">
    <property type="protein sequence ID" value="AAL82457.1"/>
    <property type="status" value="JOINED"/>
    <property type="molecule type" value="Genomic_DNA"/>
</dbReference>
<dbReference type="EMBL" id="AF472326">
    <property type="protein sequence ID" value="AAL82457.1"/>
    <property type="status" value="JOINED"/>
    <property type="molecule type" value="Genomic_DNA"/>
</dbReference>
<dbReference type="EMBL" id="AF472327">
    <property type="protein sequence ID" value="AAL82458.1"/>
    <property type="molecule type" value="Genomic_DNA"/>
</dbReference>
<dbReference type="EMBL" id="AF472304">
    <property type="protein sequence ID" value="AAL82458.1"/>
    <property type="status" value="JOINED"/>
    <property type="molecule type" value="Genomic_DNA"/>
</dbReference>
<dbReference type="EMBL" id="AF472305">
    <property type="protein sequence ID" value="AAL82458.1"/>
    <property type="status" value="JOINED"/>
    <property type="molecule type" value="Genomic_DNA"/>
</dbReference>
<dbReference type="EMBL" id="AF472307">
    <property type="protein sequence ID" value="AAL82458.1"/>
    <property type="status" value="JOINED"/>
    <property type="molecule type" value="Genomic_DNA"/>
</dbReference>
<dbReference type="EMBL" id="AF472308">
    <property type="protein sequence ID" value="AAL82458.1"/>
    <property type="status" value="JOINED"/>
    <property type="molecule type" value="Genomic_DNA"/>
</dbReference>
<dbReference type="EMBL" id="AF472309">
    <property type="protein sequence ID" value="AAL82458.1"/>
    <property type="status" value="JOINED"/>
    <property type="molecule type" value="Genomic_DNA"/>
</dbReference>
<dbReference type="EMBL" id="AF472312">
    <property type="protein sequence ID" value="AAL82458.1"/>
    <property type="status" value="JOINED"/>
    <property type="molecule type" value="Genomic_DNA"/>
</dbReference>
<dbReference type="EMBL" id="AF472315">
    <property type="protein sequence ID" value="AAL82458.1"/>
    <property type="status" value="JOINED"/>
    <property type="molecule type" value="Genomic_DNA"/>
</dbReference>
<dbReference type="EMBL" id="AF472316">
    <property type="protein sequence ID" value="AAL82458.1"/>
    <property type="status" value="JOINED"/>
    <property type="molecule type" value="Genomic_DNA"/>
</dbReference>
<dbReference type="EMBL" id="AF472317">
    <property type="protein sequence ID" value="AAL82458.1"/>
    <property type="status" value="JOINED"/>
    <property type="molecule type" value="Genomic_DNA"/>
</dbReference>
<dbReference type="EMBL" id="AF472318">
    <property type="protein sequence ID" value="AAL82458.1"/>
    <property type="status" value="JOINED"/>
    <property type="molecule type" value="Genomic_DNA"/>
</dbReference>
<dbReference type="EMBL" id="AF472319">
    <property type="protein sequence ID" value="AAL82458.1"/>
    <property type="status" value="JOINED"/>
    <property type="molecule type" value="Genomic_DNA"/>
</dbReference>
<dbReference type="EMBL" id="AF472320">
    <property type="protein sequence ID" value="AAL82458.1"/>
    <property type="status" value="JOINED"/>
    <property type="molecule type" value="Genomic_DNA"/>
</dbReference>
<dbReference type="EMBL" id="AF472322">
    <property type="protein sequence ID" value="AAL82458.1"/>
    <property type="status" value="JOINED"/>
    <property type="molecule type" value="Genomic_DNA"/>
</dbReference>
<dbReference type="EMBL" id="AF472323">
    <property type="protein sequence ID" value="AAL82458.1"/>
    <property type="status" value="JOINED"/>
    <property type="molecule type" value="Genomic_DNA"/>
</dbReference>
<dbReference type="EMBL" id="AF472324">
    <property type="protein sequence ID" value="AAL82458.1"/>
    <property type="status" value="JOINED"/>
    <property type="molecule type" value="Genomic_DNA"/>
</dbReference>
<dbReference type="EMBL" id="AF472325">
    <property type="protein sequence ID" value="AAL82458.1"/>
    <property type="status" value="JOINED"/>
    <property type="molecule type" value="Genomic_DNA"/>
</dbReference>
<dbReference type="EMBL" id="AF472326">
    <property type="protein sequence ID" value="AAL82458.1"/>
    <property type="status" value="JOINED"/>
    <property type="molecule type" value="Genomic_DNA"/>
</dbReference>
<dbReference type="EMBL" id="AF472327">
    <property type="protein sequence ID" value="AAL82459.1"/>
    <property type="molecule type" value="Genomic_DNA"/>
</dbReference>
<dbReference type="EMBL" id="AF472313">
    <property type="protein sequence ID" value="AAL82459.1"/>
    <property type="status" value="JOINED"/>
    <property type="molecule type" value="Genomic_DNA"/>
</dbReference>
<dbReference type="EMBL" id="AF472314">
    <property type="protein sequence ID" value="AAL82459.1"/>
    <property type="status" value="JOINED"/>
    <property type="molecule type" value="Genomic_DNA"/>
</dbReference>
<dbReference type="EMBL" id="AF472315">
    <property type="protein sequence ID" value="AAL82459.1"/>
    <property type="status" value="JOINED"/>
    <property type="molecule type" value="Genomic_DNA"/>
</dbReference>
<dbReference type="EMBL" id="AF472316">
    <property type="protein sequence ID" value="AAL82459.1"/>
    <property type="status" value="JOINED"/>
    <property type="molecule type" value="Genomic_DNA"/>
</dbReference>
<dbReference type="EMBL" id="AF472317">
    <property type="protein sequence ID" value="AAL82459.1"/>
    <property type="status" value="JOINED"/>
    <property type="molecule type" value="Genomic_DNA"/>
</dbReference>
<dbReference type="EMBL" id="AF472318">
    <property type="protein sequence ID" value="AAL82459.1"/>
    <property type="status" value="JOINED"/>
    <property type="molecule type" value="Genomic_DNA"/>
</dbReference>
<dbReference type="EMBL" id="AF472319">
    <property type="protein sequence ID" value="AAL82459.1"/>
    <property type="status" value="JOINED"/>
    <property type="molecule type" value="Genomic_DNA"/>
</dbReference>
<dbReference type="EMBL" id="AF472320">
    <property type="protein sequence ID" value="AAL82459.1"/>
    <property type="status" value="JOINED"/>
    <property type="molecule type" value="Genomic_DNA"/>
</dbReference>
<dbReference type="EMBL" id="AF472322">
    <property type="protein sequence ID" value="AAL82459.1"/>
    <property type="status" value="JOINED"/>
    <property type="molecule type" value="Genomic_DNA"/>
</dbReference>
<dbReference type="EMBL" id="AF472323">
    <property type="protein sequence ID" value="AAL82459.1"/>
    <property type="status" value="JOINED"/>
    <property type="molecule type" value="Genomic_DNA"/>
</dbReference>
<dbReference type="EMBL" id="AF472324">
    <property type="protein sequence ID" value="AAL82459.1"/>
    <property type="status" value="JOINED"/>
    <property type="molecule type" value="Genomic_DNA"/>
</dbReference>
<dbReference type="EMBL" id="AF472325">
    <property type="protein sequence ID" value="AAL82459.1"/>
    <property type="status" value="JOINED"/>
    <property type="molecule type" value="Genomic_DNA"/>
</dbReference>
<dbReference type="EMBL" id="AF472326">
    <property type="protein sequence ID" value="AAL82459.1"/>
    <property type="status" value="JOINED"/>
    <property type="molecule type" value="Genomic_DNA"/>
</dbReference>
<dbReference type="EMBL" id="AF472327">
    <property type="protein sequence ID" value="AAL82460.1"/>
    <property type="molecule type" value="Genomic_DNA"/>
</dbReference>
<dbReference type="EMBL" id="AF472313">
    <property type="protein sequence ID" value="AAL82460.1"/>
    <property type="status" value="JOINED"/>
    <property type="molecule type" value="Genomic_DNA"/>
</dbReference>
<dbReference type="EMBL" id="AF472315">
    <property type="protein sequence ID" value="AAL82460.1"/>
    <property type="status" value="JOINED"/>
    <property type="molecule type" value="Genomic_DNA"/>
</dbReference>
<dbReference type="EMBL" id="AF472316">
    <property type="protein sequence ID" value="AAL82460.1"/>
    <property type="status" value="JOINED"/>
    <property type="molecule type" value="Genomic_DNA"/>
</dbReference>
<dbReference type="EMBL" id="AF472317">
    <property type="protein sequence ID" value="AAL82460.1"/>
    <property type="status" value="JOINED"/>
    <property type="molecule type" value="Genomic_DNA"/>
</dbReference>
<dbReference type="EMBL" id="AF472318">
    <property type="protein sequence ID" value="AAL82460.1"/>
    <property type="status" value="JOINED"/>
    <property type="molecule type" value="Genomic_DNA"/>
</dbReference>
<dbReference type="EMBL" id="AF472319">
    <property type="protein sequence ID" value="AAL82460.1"/>
    <property type="status" value="JOINED"/>
    <property type="molecule type" value="Genomic_DNA"/>
</dbReference>
<dbReference type="EMBL" id="AF472320">
    <property type="protein sequence ID" value="AAL82460.1"/>
    <property type="status" value="JOINED"/>
    <property type="molecule type" value="Genomic_DNA"/>
</dbReference>
<dbReference type="EMBL" id="AF472322">
    <property type="protein sequence ID" value="AAL82460.1"/>
    <property type="status" value="JOINED"/>
    <property type="molecule type" value="Genomic_DNA"/>
</dbReference>
<dbReference type="EMBL" id="AF472323">
    <property type="protein sequence ID" value="AAL82460.1"/>
    <property type="status" value="JOINED"/>
    <property type="molecule type" value="Genomic_DNA"/>
</dbReference>
<dbReference type="EMBL" id="AF472324">
    <property type="protein sequence ID" value="AAL82460.1"/>
    <property type="status" value="JOINED"/>
    <property type="molecule type" value="Genomic_DNA"/>
</dbReference>
<dbReference type="EMBL" id="AF472325">
    <property type="protein sequence ID" value="AAL82460.1"/>
    <property type="status" value="JOINED"/>
    <property type="molecule type" value="Genomic_DNA"/>
</dbReference>
<dbReference type="EMBL" id="AF472326">
    <property type="protein sequence ID" value="AAL82460.1"/>
    <property type="status" value="JOINED"/>
    <property type="molecule type" value="Genomic_DNA"/>
</dbReference>
<dbReference type="EMBL" id="AF472327">
    <property type="protein sequence ID" value="AAL82461.1"/>
    <property type="molecule type" value="Genomic_DNA"/>
</dbReference>
<dbReference type="EMBL" id="AF472321">
    <property type="protein sequence ID" value="AAL82461.1"/>
    <property type="status" value="JOINED"/>
    <property type="molecule type" value="Genomic_DNA"/>
</dbReference>
<dbReference type="EMBL" id="AF472322">
    <property type="protein sequence ID" value="AAL82461.1"/>
    <property type="status" value="JOINED"/>
    <property type="molecule type" value="Genomic_DNA"/>
</dbReference>
<dbReference type="EMBL" id="AF472323">
    <property type="protein sequence ID" value="AAL82461.1"/>
    <property type="status" value="JOINED"/>
    <property type="molecule type" value="Genomic_DNA"/>
</dbReference>
<dbReference type="EMBL" id="AF472324">
    <property type="protein sequence ID" value="AAL82461.1"/>
    <property type="status" value="JOINED"/>
    <property type="molecule type" value="Genomic_DNA"/>
</dbReference>
<dbReference type="EMBL" id="AF472325">
    <property type="protein sequence ID" value="AAL82461.1"/>
    <property type="status" value="JOINED"/>
    <property type="molecule type" value="Genomic_DNA"/>
</dbReference>
<dbReference type="EMBL" id="AF472326">
    <property type="protein sequence ID" value="AAL82461.1"/>
    <property type="status" value="JOINED"/>
    <property type="molecule type" value="Genomic_DNA"/>
</dbReference>
<dbReference type="EMBL" id="AF472327">
    <property type="protein sequence ID" value="AAL82462.1"/>
    <property type="molecule type" value="Genomic_DNA"/>
</dbReference>
<dbReference type="EMBL" id="AF472304">
    <property type="protein sequence ID" value="AAL82462.1"/>
    <property type="status" value="JOINED"/>
    <property type="molecule type" value="Genomic_DNA"/>
</dbReference>
<dbReference type="EMBL" id="AF472305">
    <property type="protein sequence ID" value="AAL82462.1"/>
    <property type="status" value="JOINED"/>
    <property type="molecule type" value="Genomic_DNA"/>
</dbReference>
<dbReference type="EMBL" id="AF472307">
    <property type="protein sequence ID" value="AAL82462.1"/>
    <property type="status" value="JOINED"/>
    <property type="molecule type" value="Genomic_DNA"/>
</dbReference>
<dbReference type="EMBL" id="AF472308">
    <property type="protein sequence ID" value="AAL82462.1"/>
    <property type="status" value="JOINED"/>
    <property type="molecule type" value="Genomic_DNA"/>
</dbReference>
<dbReference type="EMBL" id="AF472309">
    <property type="protein sequence ID" value="AAL82462.1"/>
    <property type="status" value="JOINED"/>
    <property type="molecule type" value="Genomic_DNA"/>
</dbReference>
<dbReference type="EMBL" id="AF472310">
    <property type="protein sequence ID" value="AAL82462.1"/>
    <property type="status" value="JOINED"/>
    <property type="molecule type" value="Genomic_DNA"/>
</dbReference>
<dbReference type="EMBL" id="AF472311">
    <property type="protein sequence ID" value="AAL82462.1"/>
    <property type="status" value="JOINED"/>
    <property type="molecule type" value="Genomic_DNA"/>
</dbReference>
<dbReference type="EMBL" id="AF472312">
    <property type="protein sequence ID" value="AAL82462.1"/>
    <property type="status" value="JOINED"/>
    <property type="molecule type" value="Genomic_DNA"/>
</dbReference>
<dbReference type="EMBL" id="AF472315">
    <property type="protein sequence ID" value="AAL82462.1"/>
    <property type="status" value="JOINED"/>
    <property type="molecule type" value="Genomic_DNA"/>
</dbReference>
<dbReference type="EMBL" id="AF472316">
    <property type="protein sequence ID" value="AAL82462.1"/>
    <property type="status" value="JOINED"/>
    <property type="molecule type" value="Genomic_DNA"/>
</dbReference>
<dbReference type="EMBL" id="AF472317">
    <property type="protein sequence ID" value="AAL82462.1"/>
    <property type="status" value="JOINED"/>
    <property type="molecule type" value="Genomic_DNA"/>
</dbReference>
<dbReference type="EMBL" id="AF472318">
    <property type="protein sequence ID" value="AAL82462.1"/>
    <property type="status" value="JOINED"/>
    <property type="molecule type" value="Genomic_DNA"/>
</dbReference>
<dbReference type="EMBL" id="AF472319">
    <property type="protein sequence ID" value="AAL82462.1"/>
    <property type="status" value="JOINED"/>
    <property type="molecule type" value="Genomic_DNA"/>
</dbReference>
<dbReference type="EMBL" id="AF472320">
    <property type="protein sequence ID" value="AAL82462.1"/>
    <property type="status" value="JOINED"/>
    <property type="molecule type" value="Genomic_DNA"/>
</dbReference>
<dbReference type="EMBL" id="AF472322">
    <property type="protein sequence ID" value="AAL82462.1"/>
    <property type="status" value="JOINED"/>
    <property type="molecule type" value="Genomic_DNA"/>
</dbReference>
<dbReference type="EMBL" id="AF472323">
    <property type="protein sequence ID" value="AAL82462.1"/>
    <property type="status" value="JOINED"/>
    <property type="molecule type" value="Genomic_DNA"/>
</dbReference>
<dbReference type="EMBL" id="AF472324">
    <property type="protein sequence ID" value="AAL82462.1"/>
    <property type="status" value="JOINED"/>
    <property type="molecule type" value="Genomic_DNA"/>
</dbReference>
<dbReference type="EMBL" id="AF472325">
    <property type="protein sequence ID" value="AAL82462.1"/>
    <property type="status" value="JOINED"/>
    <property type="molecule type" value="Genomic_DNA"/>
</dbReference>
<dbReference type="EMBL" id="AF472326">
    <property type="protein sequence ID" value="AAL82462.1"/>
    <property type="status" value="JOINED"/>
    <property type="molecule type" value="Genomic_DNA"/>
</dbReference>
<dbReference type="EMBL" id="AK004636">
    <property type="protein sequence ID" value="BAB23427.2"/>
    <property type="molecule type" value="mRNA"/>
</dbReference>
<dbReference type="EMBL" id="AK020782">
    <property type="protein sequence ID" value="BAB32209.2"/>
    <property type="molecule type" value="mRNA"/>
</dbReference>
<dbReference type="EMBL" id="AK038540">
    <property type="protein sequence ID" value="BAC30033.1"/>
    <property type="molecule type" value="mRNA"/>
</dbReference>
<dbReference type="EMBL" id="AK049182">
    <property type="protein sequence ID" value="BAC33592.1"/>
    <property type="molecule type" value="mRNA"/>
</dbReference>
<dbReference type="EMBL" id="AL929452">
    <property type="status" value="NOT_ANNOTATED_CDS"/>
    <property type="molecule type" value="Genomic_DNA"/>
</dbReference>
<dbReference type="EMBL" id="AF243508">
    <property type="protein sequence ID" value="AAF68439.1"/>
    <property type="molecule type" value="Genomic_DNA"/>
</dbReference>
<dbReference type="EMBL" id="AI428677">
    <property type="status" value="NOT_ANNOTATED_CDS"/>
    <property type="molecule type" value="mRNA"/>
</dbReference>
<dbReference type="CCDS" id="CCDS41194.1">
    <molecule id="Q8R550-3"/>
</dbReference>
<dbReference type="CCDS" id="CCDS53234.1">
    <molecule id="Q8R550-2"/>
</dbReference>
<dbReference type="CCDS" id="CCDS53235.1">
    <molecule id="Q8R550-5"/>
</dbReference>
<dbReference type="RefSeq" id="NP_001129199.1">
    <molecule id="Q8R550-2"/>
    <property type="nucleotide sequence ID" value="NM_001135727.2"/>
</dbReference>
<dbReference type="RefSeq" id="NP_001129200.1">
    <molecule id="Q8R550-5"/>
    <property type="nucleotide sequence ID" value="NM_001135728.2"/>
</dbReference>
<dbReference type="RefSeq" id="NP_001277590.1">
    <molecule id="Q8R550-7"/>
    <property type="nucleotide sequence ID" value="NM_001290661.1"/>
</dbReference>
<dbReference type="RefSeq" id="NP_001277593.1">
    <molecule id="Q8R550-7"/>
    <property type="nucleotide sequence ID" value="NM_001290664.1"/>
</dbReference>
<dbReference type="RefSeq" id="NP_001361630.1">
    <molecule id="Q8R550-1"/>
    <property type="nucleotide sequence ID" value="NM_001374701.1"/>
</dbReference>
<dbReference type="RefSeq" id="NP_067364.2">
    <molecule id="Q8R550-3"/>
    <property type="nucleotide sequence ID" value="NM_021389.6"/>
</dbReference>
<dbReference type="RefSeq" id="XP_006528987.1">
    <molecule id="Q8R550-1"/>
    <property type="nucleotide sequence ID" value="XM_006528924.5"/>
</dbReference>
<dbReference type="RefSeq" id="XP_011246151.1">
    <property type="nucleotide sequence ID" value="XM_011247849.2"/>
</dbReference>
<dbReference type="RefSeq" id="XP_011246153.1">
    <molecule id="Q8R550-6"/>
    <property type="nucleotide sequence ID" value="XM_011247851.3"/>
</dbReference>
<dbReference type="RefSeq" id="XP_030107290.1">
    <molecule id="Q8R550-2"/>
    <property type="nucleotide sequence ID" value="XM_030251430.2"/>
</dbReference>
<dbReference type="RefSeq" id="XP_030107293.1">
    <molecule id="Q8R550-7"/>
    <property type="nucleotide sequence ID" value="XM_030251433.2"/>
</dbReference>
<dbReference type="PDB" id="1WI7">
    <property type="method" value="NMR"/>
    <property type="chains" value="A=101-155"/>
</dbReference>
<dbReference type="PDB" id="2DA9">
    <property type="method" value="NMR"/>
    <property type="chains" value="A=314-370"/>
</dbReference>
<dbReference type="PDB" id="5XHZ">
    <property type="method" value="X-ray"/>
    <property type="resolution" value="1.32 A"/>
    <property type="chains" value="A/B=98-157"/>
</dbReference>
<dbReference type="PDBsum" id="1WI7"/>
<dbReference type="PDBsum" id="2DA9"/>
<dbReference type="PDBsum" id="5XHZ"/>
<dbReference type="SMR" id="Q8R550"/>
<dbReference type="BioGRID" id="208383">
    <property type="interactions" value="41"/>
</dbReference>
<dbReference type="CORUM" id="Q8R550"/>
<dbReference type="FunCoup" id="Q8R550">
    <property type="interactions" value="1115"/>
</dbReference>
<dbReference type="IntAct" id="Q8R550">
    <property type="interactions" value="13"/>
</dbReference>
<dbReference type="MINT" id="Q8R550"/>
<dbReference type="STRING" id="10090.ENSMUSP00000108075"/>
<dbReference type="GlyGen" id="Q8R550">
    <property type="glycosylation" value="2 sites, 2 N-linked glycans (2 sites)"/>
</dbReference>
<dbReference type="iPTMnet" id="Q8R550"/>
<dbReference type="PhosphoSitePlus" id="Q8R550"/>
<dbReference type="jPOST" id="Q8R550"/>
<dbReference type="PaxDb" id="10090-ENSMUSP00000108075"/>
<dbReference type="PeptideAtlas" id="Q8R550"/>
<dbReference type="ProteomicsDB" id="261024">
    <molecule id="Q8R550-1"/>
</dbReference>
<dbReference type="ProteomicsDB" id="261025">
    <molecule id="Q8R550-2"/>
</dbReference>
<dbReference type="ProteomicsDB" id="261026">
    <molecule id="Q8R550-3"/>
</dbReference>
<dbReference type="ProteomicsDB" id="261027">
    <molecule id="Q8R550-4"/>
</dbReference>
<dbReference type="ProteomicsDB" id="261028">
    <molecule id="Q8R550-5"/>
</dbReference>
<dbReference type="ProteomicsDB" id="261029">
    <molecule id="Q8R550-6"/>
</dbReference>
<dbReference type="ProteomicsDB" id="261030">
    <molecule id="Q8R550-7"/>
</dbReference>
<dbReference type="ProteomicsDB" id="261031">
    <molecule id="Q8R550-8"/>
</dbReference>
<dbReference type="Pumba" id="Q8R550"/>
<dbReference type="Antibodypedia" id="521">
    <property type="antibodies" value="213 antibodies from 32 providers"/>
</dbReference>
<dbReference type="DNASU" id="58194"/>
<dbReference type="Ensembl" id="ENSMUST00000073094.10">
    <molecule id="Q8R550-1"/>
    <property type="protein sequence ID" value="ENSMUSP00000072840.4"/>
    <property type="gene ID" value="ENSMUSG00000040990.18"/>
</dbReference>
<dbReference type="Ensembl" id="ENSMUST00000080394.13">
    <molecule id="Q8R550-3"/>
    <property type="protein sequence ID" value="ENSMUSP00000079257.7"/>
    <property type="gene ID" value="ENSMUSG00000040990.18"/>
</dbReference>
<dbReference type="Ensembl" id="ENSMUST00000112451.8">
    <molecule id="Q8R550-5"/>
    <property type="protein sequence ID" value="ENSMUSP00000108070.2"/>
    <property type="gene ID" value="ENSMUSG00000040990.18"/>
</dbReference>
<dbReference type="Ensembl" id="ENSMUST00000112453.9">
    <molecule id="Q8R550-4"/>
    <property type="protein sequence ID" value="ENSMUSP00000108072.3"/>
    <property type="gene ID" value="ENSMUSG00000040990.18"/>
</dbReference>
<dbReference type="Ensembl" id="ENSMUST00000112456.9">
    <molecule id="Q8R550-2"/>
    <property type="protein sequence ID" value="ENSMUSP00000108075.3"/>
    <property type="gene ID" value="ENSMUSG00000040990.18"/>
</dbReference>
<dbReference type="GeneID" id="58194"/>
<dbReference type="KEGG" id="mmu:58194"/>
<dbReference type="UCSC" id="uc009uss.3">
    <molecule id="Q8R550-1"/>
    <property type="organism name" value="mouse"/>
</dbReference>
<dbReference type="UCSC" id="uc009usv.3">
    <molecule id="Q8R550-3"/>
    <property type="organism name" value="mouse"/>
</dbReference>
<dbReference type="UCSC" id="uc009usx.3">
    <molecule id="Q8R550-5"/>
    <property type="organism name" value="mouse"/>
</dbReference>
<dbReference type="AGR" id="MGI:1889583"/>
<dbReference type="CTD" id="30011"/>
<dbReference type="MGI" id="MGI:1889583">
    <property type="gene designation" value="Sh3kbp1"/>
</dbReference>
<dbReference type="VEuPathDB" id="HostDB:ENSMUSG00000040990"/>
<dbReference type="eggNOG" id="KOG4348">
    <property type="taxonomic scope" value="Eukaryota"/>
</dbReference>
<dbReference type="GeneTree" id="ENSGT00940000155886"/>
<dbReference type="HOGENOM" id="CLU_024255_1_0_1"/>
<dbReference type="InParanoid" id="Q8R550"/>
<dbReference type="OMA" id="PNSCHRS"/>
<dbReference type="OrthoDB" id="5340910at2759"/>
<dbReference type="PhylomeDB" id="Q8R550"/>
<dbReference type="TreeFam" id="TF350191"/>
<dbReference type="Reactome" id="R-MMU-182971">
    <property type="pathway name" value="EGFR downregulation"/>
</dbReference>
<dbReference type="Reactome" id="R-MMU-6807004">
    <property type="pathway name" value="Negative regulation of MET activity"/>
</dbReference>
<dbReference type="Reactome" id="R-MMU-8856825">
    <property type="pathway name" value="Cargo recognition for clathrin-mediated endocytosis"/>
</dbReference>
<dbReference type="Reactome" id="R-MMU-8856828">
    <property type="pathway name" value="Clathrin-mediated endocytosis"/>
</dbReference>
<dbReference type="Reactome" id="R-MMU-8866376">
    <property type="pathway name" value="Reelin signalling pathway"/>
</dbReference>
<dbReference type="Reactome" id="R-MMU-983695">
    <property type="pathway name" value="Antigen activates B Cell Receptor (BCR) leading to generation of second messengers"/>
</dbReference>
<dbReference type="BioGRID-ORCS" id="58194">
    <property type="hits" value="3 hits in 80 CRISPR screens"/>
</dbReference>
<dbReference type="CD-CODE" id="CE726F99">
    <property type="entry name" value="Postsynaptic density"/>
</dbReference>
<dbReference type="ChiTaRS" id="Sh3kbp1">
    <property type="organism name" value="mouse"/>
</dbReference>
<dbReference type="EvolutionaryTrace" id="Q8R550"/>
<dbReference type="PRO" id="PR:Q8R550"/>
<dbReference type="Proteomes" id="UP000000589">
    <property type="component" value="Chromosome X"/>
</dbReference>
<dbReference type="RNAct" id="Q8R550">
    <property type="molecule type" value="protein"/>
</dbReference>
<dbReference type="Bgee" id="ENSMUSG00000040990">
    <property type="expression patterns" value="Expressed in thymus and 251 other cell types or tissues"/>
</dbReference>
<dbReference type="ExpressionAtlas" id="Q8R550">
    <property type="expression patterns" value="baseline and differential"/>
</dbReference>
<dbReference type="GO" id="GO:0005911">
    <property type="term" value="C:cell-cell junction"/>
    <property type="evidence" value="ECO:0000314"/>
    <property type="project" value="MGI"/>
</dbReference>
<dbReference type="GO" id="GO:0030659">
    <property type="term" value="C:cytoplasmic vesicle membrane"/>
    <property type="evidence" value="ECO:0007669"/>
    <property type="project" value="UniProtKB-SubCell"/>
</dbReference>
<dbReference type="GO" id="GO:0005856">
    <property type="term" value="C:cytoskeleton"/>
    <property type="evidence" value="ECO:0007669"/>
    <property type="project" value="UniProtKB-SubCell"/>
</dbReference>
<dbReference type="GO" id="GO:0030139">
    <property type="term" value="C:endocytic vesicle"/>
    <property type="evidence" value="ECO:0000314"/>
    <property type="project" value="UniProtKB"/>
</dbReference>
<dbReference type="GO" id="GO:0005925">
    <property type="term" value="C:focal adhesion"/>
    <property type="evidence" value="ECO:0007669"/>
    <property type="project" value="UniProtKB-SubCell"/>
</dbReference>
<dbReference type="GO" id="GO:0098982">
    <property type="term" value="C:GABA-ergic synapse"/>
    <property type="evidence" value="ECO:0007669"/>
    <property type="project" value="Ensembl"/>
</dbReference>
<dbReference type="GO" id="GO:0098978">
    <property type="term" value="C:glutamatergic synapse"/>
    <property type="evidence" value="ECO:0007669"/>
    <property type="project" value="Ensembl"/>
</dbReference>
<dbReference type="GO" id="GO:0043005">
    <property type="term" value="C:neuron projection"/>
    <property type="evidence" value="ECO:0007669"/>
    <property type="project" value="UniProtKB-KW"/>
</dbReference>
<dbReference type="GO" id="GO:0014069">
    <property type="term" value="C:postsynaptic density"/>
    <property type="evidence" value="ECO:0007669"/>
    <property type="project" value="Ensembl"/>
</dbReference>
<dbReference type="GO" id="GO:0060090">
    <property type="term" value="F:molecular adaptor activity"/>
    <property type="evidence" value="ECO:0000266"/>
    <property type="project" value="MGI"/>
</dbReference>
<dbReference type="GO" id="GO:0017124">
    <property type="term" value="F:SH3 domain binding"/>
    <property type="evidence" value="ECO:0007669"/>
    <property type="project" value="UniProtKB-KW"/>
</dbReference>
<dbReference type="GO" id="GO:0031625">
    <property type="term" value="F:ubiquitin protein ligase binding"/>
    <property type="evidence" value="ECO:0007669"/>
    <property type="project" value="Ensembl"/>
</dbReference>
<dbReference type="GO" id="GO:0006915">
    <property type="term" value="P:apoptotic process"/>
    <property type="evidence" value="ECO:0007669"/>
    <property type="project" value="UniProtKB-KW"/>
</dbReference>
<dbReference type="GO" id="GO:0016477">
    <property type="term" value="P:cell migration"/>
    <property type="evidence" value="ECO:0000250"/>
    <property type="project" value="UniProtKB"/>
</dbReference>
<dbReference type="GO" id="GO:0007010">
    <property type="term" value="P:cytoskeleton organization"/>
    <property type="evidence" value="ECO:0000250"/>
    <property type="project" value="UniProtKB"/>
</dbReference>
<dbReference type="GO" id="GO:0050871">
    <property type="term" value="P:positive regulation of B cell activation"/>
    <property type="evidence" value="ECO:0007669"/>
    <property type="project" value="Ensembl"/>
</dbReference>
<dbReference type="GO" id="GO:0008360">
    <property type="term" value="P:regulation of cell shape"/>
    <property type="evidence" value="ECO:0000250"/>
    <property type="project" value="UniProtKB"/>
</dbReference>
<dbReference type="GO" id="GO:0070086">
    <property type="term" value="P:ubiquitin-dependent endocytosis"/>
    <property type="evidence" value="ECO:0000266"/>
    <property type="project" value="MGI"/>
</dbReference>
<dbReference type="CDD" id="cd12052">
    <property type="entry name" value="SH3_CIN85_1"/>
    <property type="match status" value="1"/>
</dbReference>
<dbReference type="CDD" id="cd12055">
    <property type="entry name" value="SH3_CIN85_2"/>
    <property type="match status" value="1"/>
</dbReference>
<dbReference type="CDD" id="cd12057">
    <property type="entry name" value="SH3_CIN85_3"/>
    <property type="match status" value="1"/>
</dbReference>
<dbReference type="FunFam" id="2.30.30.40:FF:000089">
    <property type="entry name" value="SH3 domain-containing kinase-binding protein 1"/>
    <property type="match status" value="1"/>
</dbReference>
<dbReference type="FunFam" id="2.30.30.40:FF:000094">
    <property type="entry name" value="SH3 domain-containing kinase-binding protein 1"/>
    <property type="match status" value="1"/>
</dbReference>
<dbReference type="FunFam" id="2.30.30.40:FF:000112">
    <property type="entry name" value="SH3 domain-containing kinase-binding protein 1"/>
    <property type="match status" value="1"/>
</dbReference>
<dbReference type="Gene3D" id="2.30.30.40">
    <property type="entry name" value="SH3 Domains"/>
    <property type="match status" value="3"/>
</dbReference>
<dbReference type="InterPro" id="IPR035770">
    <property type="entry name" value="CIN85_SH3_1"/>
</dbReference>
<dbReference type="InterPro" id="IPR035771">
    <property type="entry name" value="CIN85_SH3_2"/>
</dbReference>
<dbReference type="InterPro" id="IPR035772">
    <property type="entry name" value="CIN85_SH3_3"/>
</dbReference>
<dbReference type="InterPro" id="IPR050384">
    <property type="entry name" value="Endophilin_SH3RF"/>
</dbReference>
<dbReference type="InterPro" id="IPR036028">
    <property type="entry name" value="SH3-like_dom_sf"/>
</dbReference>
<dbReference type="InterPro" id="IPR001452">
    <property type="entry name" value="SH3_domain"/>
</dbReference>
<dbReference type="PANTHER" id="PTHR14167">
    <property type="entry name" value="SH3 DOMAIN-CONTAINING"/>
    <property type="match status" value="1"/>
</dbReference>
<dbReference type="PANTHER" id="PTHR14167:SF6">
    <property type="entry name" value="SH3 DOMAIN-CONTAINING KINASE-BINDING PROTEIN 1"/>
    <property type="match status" value="1"/>
</dbReference>
<dbReference type="Pfam" id="PF14604">
    <property type="entry name" value="SH3_9"/>
    <property type="match status" value="3"/>
</dbReference>
<dbReference type="PRINTS" id="PR00499">
    <property type="entry name" value="P67PHOX"/>
</dbReference>
<dbReference type="PRINTS" id="PR00452">
    <property type="entry name" value="SH3DOMAIN"/>
</dbReference>
<dbReference type="SMART" id="SM00326">
    <property type="entry name" value="SH3"/>
    <property type="match status" value="3"/>
</dbReference>
<dbReference type="SUPFAM" id="SSF50044">
    <property type="entry name" value="SH3-domain"/>
    <property type="match status" value="3"/>
</dbReference>
<dbReference type="PROSITE" id="PS50002">
    <property type="entry name" value="SH3"/>
    <property type="match status" value="3"/>
</dbReference>
<organism>
    <name type="scientific">Mus musculus</name>
    <name type="common">Mouse</name>
    <dbReference type="NCBI Taxonomy" id="10090"/>
    <lineage>
        <taxon>Eukaryota</taxon>
        <taxon>Metazoa</taxon>
        <taxon>Chordata</taxon>
        <taxon>Craniata</taxon>
        <taxon>Vertebrata</taxon>
        <taxon>Euteleostomi</taxon>
        <taxon>Mammalia</taxon>
        <taxon>Eutheria</taxon>
        <taxon>Euarchontoglires</taxon>
        <taxon>Glires</taxon>
        <taxon>Rodentia</taxon>
        <taxon>Myomorpha</taxon>
        <taxon>Muroidea</taxon>
        <taxon>Muridae</taxon>
        <taxon>Murinae</taxon>
        <taxon>Mus</taxon>
        <taxon>Mus</taxon>
    </lineage>
</organism>